<organism>
    <name type="scientific">Bacillus cereus (strain AH187)</name>
    <dbReference type="NCBI Taxonomy" id="405534"/>
    <lineage>
        <taxon>Bacteria</taxon>
        <taxon>Bacillati</taxon>
        <taxon>Bacillota</taxon>
        <taxon>Bacilli</taxon>
        <taxon>Bacillales</taxon>
        <taxon>Bacillaceae</taxon>
        <taxon>Bacillus</taxon>
        <taxon>Bacillus cereus group</taxon>
    </lineage>
</organism>
<sequence length="158" mass="17219">MFRIGQGFDVHEFAEGRPLIIGGITIPHEKGLIGHSDADVLLHTIADACLGAIAAGDIGKHFPDTDPAFKDADSAVLLQKVWEFVREQGYELGNLDCTIIAQKPKMAPHIESMRKRISELLETSIDNINVKATTTEKLGFTGREEGIASQAVVLLQKK</sequence>
<keyword id="KW-0414">Isoprene biosynthesis</keyword>
<keyword id="KW-0456">Lyase</keyword>
<keyword id="KW-0479">Metal-binding</keyword>
<proteinExistence type="inferred from homology"/>
<accession>B7HQS1</accession>
<comment type="function">
    <text evidence="1">Involved in the biosynthesis of isopentenyl diphosphate (IPP) and dimethylallyl diphosphate (DMAPP), two major building blocks of isoprenoid compounds. Catalyzes the conversion of 4-diphosphocytidyl-2-C-methyl-D-erythritol 2-phosphate (CDP-ME2P) to 2-C-methyl-D-erythritol 2,4-cyclodiphosphate (ME-CPP) with a corresponding release of cytidine 5-monophosphate (CMP).</text>
</comment>
<comment type="catalytic activity">
    <reaction evidence="1">
        <text>4-CDP-2-C-methyl-D-erythritol 2-phosphate = 2-C-methyl-D-erythritol 2,4-cyclic diphosphate + CMP</text>
        <dbReference type="Rhea" id="RHEA:23864"/>
        <dbReference type="ChEBI" id="CHEBI:57919"/>
        <dbReference type="ChEBI" id="CHEBI:58483"/>
        <dbReference type="ChEBI" id="CHEBI:60377"/>
        <dbReference type="EC" id="4.6.1.12"/>
    </reaction>
</comment>
<comment type="cofactor">
    <cofactor evidence="1">
        <name>a divalent metal cation</name>
        <dbReference type="ChEBI" id="CHEBI:60240"/>
    </cofactor>
    <text evidence="1">Binds 1 divalent metal cation per subunit.</text>
</comment>
<comment type="pathway">
    <text evidence="1">Isoprenoid biosynthesis; isopentenyl diphosphate biosynthesis via DXP pathway; isopentenyl diphosphate from 1-deoxy-D-xylulose 5-phosphate: step 4/6.</text>
</comment>
<comment type="subunit">
    <text evidence="1">Homotrimer.</text>
</comment>
<comment type="similarity">
    <text evidence="1">Belongs to the IspF family.</text>
</comment>
<protein>
    <recommendedName>
        <fullName evidence="1">2-C-methyl-D-erythritol 2,4-cyclodiphosphate synthase</fullName>
        <shortName evidence="1">MECDP-synthase</shortName>
        <shortName evidence="1">MECPP-synthase</shortName>
        <shortName evidence="1">MECPS</shortName>
        <ecNumber evidence="1">4.6.1.12</ecNumber>
    </recommendedName>
</protein>
<feature type="chain" id="PRO_1000117420" description="2-C-methyl-D-erythritol 2,4-cyclodiphosphate synthase">
    <location>
        <begin position="1"/>
        <end position="158"/>
    </location>
</feature>
<feature type="binding site" evidence="1">
    <location>
        <begin position="9"/>
        <end position="11"/>
    </location>
    <ligand>
        <name>4-CDP-2-C-methyl-D-erythritol 2-phosphate</name>
        <dbReference type="ChEBI" id="CHEBI:57919"/>
    </ligand>
</feature>
<feature type="binding site" evidence="1">
    <location>
        <position position="9"/>
    </location>
    <ligand>
        <name>a divalent metal cation</name>
        <dbReference type="ChEBI" id="CHEBI:60240"/>
    </ligand>
</feature>
<feature type="binding site" evidence="1">
    <location>
        <position position="11"/>
    </location>
    <ligand>
        <name>a divalent metal cation</name>
        <dbReference type="ChEBI" id="CHEBI:60240"/>
    </ligand>
</feature>
<feature type="binding site" evidence="1">
    <location>
        <begin position="35"/>
        <end position="36"/>
    </location>
    <ligand>
        <name>4-CDP-2-C-methyl-D-erythritol 2-phosphate</name>
        <dbReference type="ChEBI" id="CHEBI:57919"/>
    </ligand>
</feature>
<feature type="binding site" evidence="1">
    <location>
        <position position="43"/>
    </location>
    <ligand>
        <name>a divalent metal cation</name>
        <dbReference type="ChEBI" id="CHEBI:60240"/>
    </ligand>
</feature>
<feature type="binding site" evidence="1">
    <location>
        <begin position="57"/>
        <end position="59"/>
    </location>
    <ligand>
        <name>4-CDP-2-C-methyl-D-erythritol 2-phosphate</name>
        <dbReference type="ChEBI" id="CHEBI:57919"/>
    </ligand>
</feature>
<feature type="binding site" evidence="1">
    <location>
        <begin position="62"/>
        <end position="66"/>
    </location>
    <ligand>
        <name>4-CDP-2-C-methyl-D-erythritol 2-phosphate</name>
        <dbReference type="ChEBI" id="CHEBI:57919"/>
    </ligand>
</feature>
<feature type="binding site" evidence="1">
    <location>
        <begin position="101"/>
        <end position="107"/>
    </location>
    <ligand>
        <name>4-CDP-2-C-methyl-D-erythritol 2-phosphate</name>
        <dbReference type="ChEBI" id="CHEBI:57919"/>
    </ligand>
</feature>
<feature type="binding site" evidence="1">
    <location>
        <begin position="133"/>
        <end position="136"/>
    </location>
    <ligand>
        <name>4-CDP-2-C-methyl-D-erythritol 2-phosphate</name>
        <dbReference type="ChEBI" id="CHEBI:57919"/>
    </ligand>
</feature>
<feature type="binding site" evidence="1">
    <location>
        <position position="140"/>
    </location>
    <ligand>
        <name>4-CDP-2-C-methyl-D-erythritol 2-phosphate</name>
        <dbReference type="ChEBI" id="CHEBI:57919"/>
    </ligand>
</feature>
<feature type="binding site" evidence="1">
    <location>
        <position position="143"/>
    </location>
    <ligand>
        <name>4-CDP-2-C-methyl-D-erythritol 2-phosphate</name>
        <dbReference type="ChEBI" id="CHEBI:57919"/>
    </ligand>
</feature>
<feature type="site" description="Transition state stabilizer" evidence="1">
    <location>
        <position position="35"/>
    </location>
</feature>
<feature type="site" description="Transition state stabilizer" evidence="1">
    <location>
        <position position="134"/>
    </location>
</feature>
<reference key="1">
    <citation type="submission" date="2008-10" db="EMBL/GenBank/DDBJ databases">
        <title>Genome sequence of Bacillus cereus AH187.</title>
        <authorList>
            <person name="Dodson R.J."/>
            <person name="Durkin A.S."/>
            <person name="Rosovitz M.J."/>
            <person name="Rasko D.A."/>
            <person name="Kolsto A.B."/>
            <person name="Okstad O.A."/>
            <person name="Ravel J."/>
            <person name="Sutton G."/>
        </authorList>
    </citation>
    <scope>NUCLEOTIDE SEQUENCE [LARGE SCALE GENOMIC DNA]</scope>
    <source>
        <strain>AH187</strain>
    </source>
</reference>
<gene>
    <name evidence="1" type="primary">ispF</name>
    <name type="ordered locus">BCAH187_A0117</name>
</gene>
<evidence type="ECO:0000255" key="1">
    <source>
        <dbReference type="HAMAP-Rule" id="MF_00107"/>
    </source>
</evidence>
<dbReference type="EC" id="4.6.1.12" evidence="1"/>
<dbReference type="EMBL" id="CP001177">
    <property type="protein sequence ID" value="ACJ78655.1"/>
    <property type="molecule type" value="Genomic_DNA"/>
</dbReference>
<dbReference type="SMR" id="B7HQS1"/>
<dbReference type="KEGG" id="bcr:BCAH187_A0117"/>
<dbReference type="HOGENOM" id="CLU_084630_2_0_9"/>
<dbReference type="UniPathway" id="UPA00056">
    <property type="reaction ID" value="UER00095"/>
</dbReference>
<dbReference type="Proteomes" id="UP000002214">
    <property type="component" value="Chromosome"/>
</dbReference>
<dbReference type="GO" id="GO:0008685">
    <property type="term" value="F:2-C-methyl-D-erythritol 2,4-cyclodiphosphate synthase activity"/>
    <property type="evidence" value="ECO:0007669"/>
    <property type="project" value="UniProtKB-UniRule"/>
</dbReference>
<dbReference type="GO" id="GO:0046872">
    <property type="term" value="F:metal ion binding"/>
    <property type="evidence" value="ECO:0007669"/>
    <property type="project" value="UniProtKB-KW"/>
</dbReference>
<dbReference type="GO" id="GO:0019288">
    <property type="term" value="P:isopentenyl diphosphate biosynthetic process, methylerythritol 4-phosphate pathway"/>
    <property type="evidence" value="ECO:0007669"/>
    <property type="project" value="UniProtKB-UniRule"/>
</dbReference>
<dbReference type="GO" id="GO:0016114">
    <property type="term" value="P:terpenoid biosynthetic process"/>
    <property type="evidence" value="ECO:0007669"/>
    <property type="project" value="InterPro"/>
</dbReference>
<dbReference type="CDD" id="cd00554">
    <property type="entry name" value="MECDP_synthase"/>
    <property type="match status" value="1"/>
</dbReference>
<dbReference type="FunFam" id="3.30.1330.50:FF:000001">
    <property type="entry name" value="2-C-methyl-D-erythritol 2,4-cyclodiphosphate synthase"/>
    <property type="match status" value="1"/>
</dbReference>
<dbReference type="Gene3D" id="3.30.1330.50">
    <property type="entry name" value="2-C-methyl-D-erythritol 2,4-cyclodiphosphate synthase"/>
    <property type="match status" value="1"/>
</dbReference>
<dbReference type="HAMAP" id="MF_00107">
    <property type="entry name" value="IspF"/>
    <property type="match status" value="1"/>
</dbReference>
<dbReference type="InterPro" id="IPR003526">
    <property type="entry name" value="MECDP_synthase"/>
</dbReference>
<dbReference type="InterPro" id="IPR020555">
    <property type="entry name" value="MECDP_synthase_CS"/>
</dbReference>
<dbReference type="InterPro" id="IPR036571">
    <property type="entry name" value="MECDP_synthase_sf"/>
</dbReference>
<dbReference type="NCBIfam" id="TIGR00151">
    <property type="entry name" value="ispF"/>
    <property type="match status" value="1"/>
</dbReference>
<dbReference type="PANTHER" id="PTHR43181">
    <property type="entry name" value="2-C-METHYL-D-ERYTHRITOL 2,4-CYCLODIPHOSPHATE SYNTHASE, CHLOROPLASTIC"/>
    <property type="match status" value="1"/>
</dbReference>
<dbReference type="PANTHER" id="PTHR43181:SF1">
    <property type="entry name" value="2-C-METHYL-D-ERYTHRITOL 2,4-CYCLODIPHOSPHATE SYNTHASE, CHLOROPLASTIC"/>
    <property type="match status" value="1"/>
</dbReference>
<dbReference type="Pfam" id="PF02542">
    <property type="entry name" value="YgbB"/>
    <property type="match status" value="1"/>
</dbReference>
<dbReference type="SUPFAM" id="SSF69765">
    <property type="entry name" value="IpsF-like"/>
    <property type="match status" value="1"/>
</dbReference>
<dbReference type="PROSITE" id="PS01350">
    <property type="entry name" value="ISPF"/>
    <property type="match status" value="1"/>
</dbReference>
<name>ISPF_BACC7</name>